<sequence>MTSKLAVALLAAFLLSAALCEAAVLSRMSTELRCQCIKTHSTPFHPKFIKELRVIESGPHCENSEIIVKLTNGNEVCLNPKEKWVQKVVQVFVKRAEKQDP</sequence>
<evidence type="ECO:0000250" key="1"/>
<evidence type="ECO:0000250" key="2">
    <source>
        <dbReference type="UniProtKB" id="P10145"/>
    </source>
</evidence>
<evidence type="ECO:0000305" key="3"/>
<keyword id="KW-0145">Chemotaxis</keyword>
<keyword id="KW-0202">Cytokine</keyword>
<keyword id="KW-1015">Disulfide bond</keyword>
<keyword id="KW-0395">Inflammatory response</keyword>
<keyword id="KW-1185">Reference proteome</keyword>
<keyword id="KW-0964">Secreted</keyword>
<keyword id="KW-0732">Signal</keyword>
<protein>
    <recommendedName>
        <fullName>Interleukin-8</fullName>
        <shortName>IL-8</shortName>
    </recommendedName>
    <alternativeName>
        <fullName>C-X-C motif chemokine 8</fullName>
    </alternativeName>
    <alternativeName>
        <fullName>Chemokine (C-X-C motif) ligand 8</fullName>
    </alternativeName>
</protein>
<gene>
    <name type="primary">CXCL8</name>
    <name type="synonym">IL8</name>
</gene>
<comment type="function">
    <text evidence="2">Chemotactic factor that mediates inflammatory response by attracting neutrophils, basophils, and T-cells to clear pathogens and protect the host from infection. Also plays an important role in neutrophil activation. Released in response to an inflammatory stimulus, exerts its effect by binding to the G-protein-coupled receptors CXCR1 and CXCR2, primarily found in neutrophils, monocytes and endothelial cells. G-protein heterotrimer (alpha, beta, gamma subunits) constitutively binds to CXCR1/CXCR2 receptor and activation by IL8 leads to beta and gamma subunits release from Galpha (GNAI2 in neutrophils) and activation of several downstream signaling pathways including PI3K and MAPK pathways.</text>
</comment>
<comment type="subunit">
    <text evidence="2">Homodimer. Interacts with TNFAIP6 (via Link domain); this interaction interferes with chemokine binding to glycosaminoglycans.</text>
</comment>
<comment type="subcellular location">
    <subcellularLocation>
        <location>Secreted</location>
    </subcellularLocation>
</comment>
<comment type="similarity">
    <text evidence="3">Belongs to the intercrine alpha (chemokine CxC) family.</text>
</comment>
<feature type="signal peptide" evidence="1">
    <location>
        <begin position="1"/>
        <end position="22"/>
    </location>
</feature>
<feature type="chain" id="PRO_0000005120" description="Interleukin-8">
    <location>
        <begin position="23"/>
        <end position="101"/>
    </location>
</feature>
<feature type="disulfide bond" evidence="1">
    <location>
        <begin position="34"/>
        <end position="61"/>
    </location>
</feature>
<feature type="disulfide bond" evidence="1">
    <location>
        <begin position="36"/>
        <end position="77"/>
    </location>
</feature>
<feature type="sequence conflict" description="In Ref. 3; AAV97702." evidence="3" ref="3">
    <original>H</original>
    <variation>Y</variation>
    <location>
        <position position="45"/>
    </location>
</feature>
<dbReference type="EMBL" id="S82598">
    <property type="protein sequence ID" value="AAB37483.1"/>
    <property type="molecule type" value="mRNA"/>
</dbReference>
<dbReference type="EMBL" id="AF232704">
    <property type="protein sequence ID" value="AAF37575.1"/>
    <property type="molecule type" value="mRNA"/>
</dbReference>
<dbReference type="EMBL" id="AY849380">
    <property type="protein sequence ID" value="AAV97702.1"/>
    <property type="molecule type" value="Genomic_DNA"/>
</dbReference>
<dbReference type="EMBL" id="EU276073">
    <property type="protein sequence ID" value="ABX72071.1"/>
    <property type="molecule type" value="mRNA"/>
</dbReference>
<dbReference type="EMBL" id="BC103310">
    <property type="protein sequence ID" value="AAI03311.1"/>
    <property type="molecule type" value="mRNA"/>
</dbReference>
<dbReference type="RefSeq" id="NP_776350.1">
    <property type="nucleotide sequence ID" value="NM_173925.2"/>
</dbReference>
<dbReference type="SMR" id="P79255"/>
<dbReference type="FunCoup" id="P79255">
    <property type="interactions" value="471"/>
</dbReference>
<dbReference type="STRING" id="9913.ENSBTAP00000026275"/>
<dbReference type="PaxDb" id="9913-ENSBTAP00000026275"/>
<dbReference type="Ensembl" id="ENSBTAT00000026275.4">
    <property type="protein sequence ID" value="ENSBTAP00000026275.2"/>
    <property type="gene ID" value="ENSBTAG00000019716.4"/>
</dbReference>
<dbReference type="GeneID" id="280828"/>
<dbReference type="KEGG" id="bta:280828"/>
<dbReference type="CTD" id="3576"/>
<dbReference type="VEuPathDB" id="HostDB:ENSBTAG00000019716"/>
<dbReference type="VGNC" id="VGNC:27853">
    <property type="gene designation" value="CXCL8"/>
</dbReference>
<dbReference type="eggNOG" id="ENOG502S7MM">
    <property type="taxonomic scope" value="Eukaryota"/>
</dbReference>
<dbReference type="GeneTree" id="ENSGT00940000160757"/>
<dbReference type="HOGENOM" id="CLU_143902_3_0_1"/>
<dbReference type="InParanoid" id="P79255"/>
<dbReference type="OMA" id="IGTELRC"/>
<dbReference type="OrthoDB" id="9937393at2759"/>
<dbReference type="TreeFam" id="TF333433"/>
<dbReference type="Reactome" id="R-BTA-375276">
    <property type="pathway name" value="Peptide ligand-binding receptors"/>
</dbReference>
<dbReference type="Reactome" id="R-BTA-380108">
    <property type="pathway name" value="Chemokine receptors bind chemokines"/>
</dbReference>
<dbReference type="Reactome" id="R-BTA-418594">
    <property type="pathway name" value="G alpha (i) signalling events"/>
</dbReference>
<dbReference type="Proteomes" id="UP000009136">
    <property type="component" value="Chromosome 6"/>
</dbReference>
<dbReference type="Bgee" id="ENSBTAG00000019716">
    <property type="expression patterns" value="Expressed in milk and 67 other cell types or tissues"/>
</dbReference>
<dbReference type="GO" id="GO:0005576">
    <property type="term" value="C:extracellular region"/>
    <property type="evidence" value="ECO:0000303"/>
    <property type="project" value="UniProtKB"/>
</dbReference>
<dbReference type="GO" id="GO:0005615">
    <property type="term" value="C:extracellular space"/>
    <property type="evidence" value="ECO:0000318"/>
    <property type="project" value="GO_Central"/>
</dbReference>
<dbReference type="GO" id="GO:0008009">
    <property type="term" value="F:chemokine activity"/>
    <property type="evidence" value="ECO:0000318"/>
    <property type="project" value="GO_Central"/>
</dbReference>
<dbReference type="GO" id="GO:0045236">
    <property type="term" value="F:CXCR chemokine receptor binding"/>
    <property type="evidence" value="ECO:0000318"/>
    <property type="project" value="GO_Central"/>
</dbReference>
<dbReference type="GO" id="GO:0008201">
    <property type="term" value="F:heparin binding"/>
    <property type="evidence" value="ECO:0000250"/>
    <property type="project" value="UniProtKB"/>
</dbReference>
<dbReference type="GO" id="GO:0005153">
    <property type="term" value="F:interleukin-8 receptor binding"/>
    <property type="evidence" value="ECO:0000250"/>
    <property type="project" value="UniProtKB"/>
</dbReference>
<dbReference type="GO" id="GO:0061844">
    <property type="term" value="P:antimicrobial humoral immune response mediated by antimicrobial peptide"/>
    <property type="evidence" value="ECO:0000318"/>
    <property type="project" value="GO_Central"/>
</dbReference>
<dbReference type="GO" id="GO:0044344">
    <property type="term" value="P:cellular response to fibroblast growth factor stimulus"/>
    <property type="evidence" value="ECO:0007669"/>
    <property type="project" value="Ensembl"/>
</dbReference>
<dbReference type="GO" id="GO:0071347">
    <property type="term" value="P:cellular response to interleukin-1"/>
    <property type="evidence" value="ECO:0007669"/>
    <property type="project" value="Ensembl"/>
</dbReference>
<dbReference type="GO" id="GO:0071222">
    <property type="term" value="P:cellular response to lipopolysaccharide"/>
    <property type="evidence" value="ECO:0000318"/>
    <property type="project" value="GO_Central"/>
</dbReference>
<dbReference type="GO" id="GO:0071356">
    <property type="term" value="P:cellular response to tumor necrosis factor"/>
    <property type="evidence" value="ECO:0007669"/>
    <property type="project" value="Ensembl"/>
</dbReference>
<dbReference type="GO" id="GO:0048566">
    <property type="term" value="P:embryonic digestive tract development"/>
    <property type="evidence" value="ECO:0007669"/>
    <property type="project" value="Ensembl"/>
</dbReference>
<dbReference type="GO" id="GO:0050930">
    <property type="term" value="P:induction of positive chemotaxis"/>
    <property type="evidence" value="ECO:0000315"/>
    <property type="project" value="UniProtKB"/>
</dbReference>
<dbReference type="GO" id="GO:0006954">
    <property type="term" value="P:inflammatory response"/>
    <property type="evidence" value="ECO:0000318"/>
    <property type="project" value="GO_Central"/>
</dbReference>
<dbReference type="GO" id="GO:0035556">
    <property type="term" value="P:intracellular signal transduction"/>
    <property type="evidence" value="ECO:0007669"/>
    <property type="project" value="Ensembl"/>
</dbReference>
<dbReference type="GO" id="GO:0060354">
    <property type="term" value="P:negative regulation of cell adhesion molecule production"/>
    <property type="evidence" value="ECO:0007669"/>
    <property type="project" value="Ensembl"/>
</dbReference>
<dbReference type="GO" id="GO:0045744">
    <property type="term" value="P:negative regulation of G protein-coupled receptor signaling pathway"/>
    <property type="evidence" value="ECO:0007669"/>
    <property type="project" value="Ensembl"/>
</dbReference>
<dbReference type="GO" id="GO:0010629">
    <property type="term" value="P:negative regulation of gene expression"/>
    <property type="evidence" value="ECO:0007669"/>
    <property type="project" value="Ensembl"/>
</dbReference>
<dbReference type="GO" id="GO:0042119">
    <property type="term" value="P:neutrophil activation"/>
    <property type="evidence" value="ECO:0000304"/>
    <property type="project" value="UniProtKB"/>
</dbReference>
<dbReference type="GO" id="GO:0030593">
    <property type="term" value="P:neutrophil chemotaxis"/>
    <property type="evidence" value="ECO:0000315"/>
    <property type="project" value="UniProtKB"/>
</dbReference>
<dbReference type="GO" id="GO:0045766">
    <property type="term" value="P:positive regulation of angiogenesis"/>
    <property type="evidence" value="ECO:0007669"/>
    <property type="project" value="Ensembl"/>
</dbReference>
<dbReference type="GO" id="GO:0010628">
    <property type="term" value="P:positive regulation of gene expression"/>
    <property type="evidence" value="ECO:0007669"/>
    <property type="project" value="Ensembl"/>
</dbReference>
<dbReference type="GO" id="GO:0031623">
    <property type="term" value="P:receptor internalization"/>
    <property type="evidence" value="ECO:0007669"/>
    <property type="project" value="Ensembl"/>
</dbReference>
<dbReference type="GO" id="GO:0030155">
    <property type="term" value="P:regulation of cell adhesion"/>
    <property type="evidence" value="ECO:0000250"/>
    <property type="project" value="UniProtKB"/>
</dbReference>
<dbReference type="GO" id="GO:2000535">
    <property type="term" value="P:regulation of entry of bacterium into host cell"/>
    <property type="evidence" value="ECO:0007669"/>
    <property type="project" value="Ensembl"/>
</dbReference>
<dbReference type="GO" id="GO:0045091">
    <property type="term" value="P:regulation of single stranded viral RNA replication via double stranded DNA intermediate"/>
    <property type="evidence" value="ECO:0000250"/>
    <property type="project" value="UniProtKB"/>
</dbReference>
<dbReference type="GO" id="GO:0034976">
    <property type="term" value="P:response to endoplasmic reticulum stress"/>
    <property type="evidence" value="ECO:0007669"/>
    <property type="project" value="Ensembl"/>
</dbReference>
<dbReference type="CDD" id="cd00273">
    <property type="entry name" value="Chemokine_CXC"/>
    <property type="match status" value="1"/>
</dbReference>
<dbReference type="FunFam" id="2.40.50.40:FF:000004">
    <property type="entry name" value="C-X-C motif chemokine"/>
    <property type="match status" value="1"/>
</dbReference>
<dbReference type="Gene3D" id="2.40.50.40">
    <property type="match status" value="1"/>
</dbReference>
<dbReference type="InterPro" id="IPR039809">
    <property type="entry name" value="Chemokine_b/g/d"/>
</dbReference>
<dbReference type="InterPro" id="IPR001089">
    <property type="entry name" value="Chemokine_CXC"/>
</dbReference>
<dbReference type="InterPro" id="IPR018048">
    <property type="entry name" value="Chemokine_CXC_CS"/>
</dbReference>
<dbReference type="InterPro" id="IPR001811">
    <property type="entry name" value="Chemokine_IL8-like_dom"/>
</dbReference>
<dbReference type="InterPro" id="IPR033899">
    <property type="entry name" value="CXC_Chemokine_domain"/>
</dbReference>
<dbReference type="InterPro" id="IPR036048">
    <property type="entry name" value="Interleukin_8-like_sf"/>
</dbReference>
<dbReference type="PANTHER" id="PTHR12015:SF200">
    <property type="entry name" value="INTERLEUKIN-8"/>
    <property type="match status" value="1"/>
</dbReference>
<dbReference type="PANTHER" id="PTHR12015">
    <property type="entry name" value="SMALL INDUCIBLE CYTOKINE A"/>
    <property type="match status" value="1"/>
</dbReference>
<dbReference type="Pfam" id="PF00048">
    <property type="entry name" value="IL8"/>
    <property type="match status" value="1"/>
</dbReference>
<dbReference type="PRINTS" id="PR00436">
    <property type="entry name" value="INTERLEUKIN8"/>
</dbReference>
<dbReference type="PRINTS" id="PR00437">
    <property type="entry name" value="SMALLCYTKCXC"/>
</dbReference>
<dbReference type="SMART" id="SM00199">
    <property type="entry name" value="SCY"/>
    <property type="match status" value="1"/>
</dbReference>
<dbReference type="SUPFAM" id="SSF54117">
    <property type="entry name" value="Interleukin 8-like chemokines"/>
    <property type="match status" value="1"/>
</dbReference>
<dbReference type="PROSITE" id="PS00471">
    <property type="entry name" value="SMALL_CYTOKINES_CXC"/>
    <property type="match status" value="1"/>
</dbReference>
<proteinExistence type="inferred from homology"/>
<name>IL8_BOVIN</name>
<accession>P79255</accession>
<accession>A9QWR1</accession>
<accession>Q3ZBG3</accession>
<accession>Q5MAD6</accession>
<organism>
    <name type="scientific">Bos taurus</name>
    <name type="common">Bovine</name>
    <dbReference type="NCBI Taxonomy" id="9913"/>
    <lineage>
        <taxon>Eukaryota</taxon>
        <taxon>Metazoa</taxon>
        <taxon>Chordata</taxon>
        <taxon>Craniata</taxon>
        <taxon>Vertebrata</taxon>
        <taxon>Euteleostomi</taxon>
        <taxon>Mammalia</taxon>
        <taxon>Eutheria</taxon>
        <taxon>Laurasiatheria</taxon>
        <taxon>Artiodactyla</taxon>
        <taxon>Ruminantia</taxon>
        <taxon>Pecora</taxon>
        <taxon>Bovidae</taxon>
        <taxon>Bovinae</taxon>
        <taxon>Bos</taxon>
    </lineage>
</organism>
<reference key="1">
    <citation type="journal article" date="1996" name="Microb. Pathog.">
        <title>Molecular cloning and expression of bovine interleukin-8.</title>
        <authorList>
            <person name="Morsey M.A."/>
            <person name="Popowych Y."/>
            <person name="Kowalski J."/>
            <person name="Gerlach G."/>
            <person name="Godson D."/>
            <person name="Campos M."/>
            <person name="Babiuk L.A."/>
        </authorList>
    </citation>
    <scope>NUCLEOTIDE SEQUENCE [MRNA]</scope>
</reference>
<reference key="2">
    <citation type="submission" date="2000-02" db="EMBL/GenBank/DDBJ databases">
        <title>Cloning and sequencing of bovine interleukin 8 cDNA isolated from lipopolysaccharide stimulated monocytes in vitro.</title>
        <authorList>
            <person name="Galligan C.L."/>
            <person name="Yoshimura T."/>
            <person name="Coomber B.L."/>
        </authorList>
    </citation>
    <scope>NUCLEOTIDE SEQUENCE [MRNA]</scope>
</reference>
<reference key="3">
    <citation type="submission" date="2004-12" db="EMBL/GenBank/DDBJ databases">
        <title>Estimating probability of parentage in U.S. beef and dairy cattle with single nucleotide polymorphisms.</title>
        <authorList>
            <person name="Heaton M.P."/>
            <person name="Clawson M.L."/>
            <person name="Snelling W.M."/>
            <person name="Keele J.W."/>
            <person name="Harhay G.P."/>
            <person name="Wiedmann R.T."/>
            <person name="Bennett G.L."/>
            <person name="Smith T.P.L."/>
            <person name="Stone R.T."/>
            <person name="Freking B.A."/>
            <person name="Van Tassell C.P."/>
            <person name="Sonstegard T.S."/>
            <person name="Gasbarre L.C."/>
            <person name="Carr J."/>
            <person name="DiBello P."/>
            <person name="Kumar M."/>
            <person name="Lee M.S."/>
            <person name="Murthy J."/>
            <person name="Otto J."/>
            <person name="Salisbury B."/>
            <person name="Schulz V."/>
            <person name="Tracy R."/>
            <person name="Hawk D.A."/>
            <person name="Kalbfleisch T."/>
            <person name="Laegreid W.W."/>
        </authorList>
    </citation>
    <scope>NUCLEOTIDE SEQUENCE [GENOMIC DNA]</scope>
</reference>
<reference key="4">
    <citation type="submission" date="2007-11" db="EMBL/GenBank/DDBJ databases">
        <title>U.S. veterinary immune reagent network: expressed bovine gene sequences.</title>
        <authorList>
            <consortium name="U.S. Veterinary Immune Reagent Network"/>
            <person name="Hudgens T."/>
            <person name="Tompkins D."/>
            <person name="Baldwin C.L."/>
        </authorList>
    </citation>
    <scope>NUCLEOTIDE SEQUENCE [LARGE SCALE MRNA]</scope>
    <source>
        <strain>Belted Galloway</strain>
        <tissue>Peripheral blood</tissue>
    </source>
</reference>
<reference key="5">
    <citation type="submission" date="2005-08" db="EMBL/GenBank/DDBJ databases">
        <authorList>
            <consortium name="NIH - Mammalian Gene Collection (MGC) project"/>
        </authorList>
    </citation>
    <scope>NUCLEOTIDE SEQUENCE [LARGE SCALE MRNA]</scope>
    <source>
        <strain>Hereford</strain>
        <tissue>Ascending colon</tissue>
    </source>
</reference>